<name>YDDA_BACSU</name>
<proteinExistence type="predicted"/>
<keyword id="KW-1185">Reference proteome</keyword>
<accession>P96638</accession>
<accession>Q797J6</accession>
<reference key="1">
    <citation type="submission" date="1997-03" db="EMBL/GenBank/DDBJ databases">
        <title>A 148 kbp sequence of the region between 35 and 47 degree of the Bacillus subtilis genome.</title>
        <authorList>
            <person name="Kasahara Y."/>
            <person name="Nakai S."/>
            <person name="Lee S."/>
            <person name="Sadaie Y."/>
            <person name="Ogasawara N."/>
        </authorList>
    </citation>
    <scope>NUCLEOTIDE SEQUENCE [GENOMIC DNA]</scope>
    <source>
        <strain>168</strain>
    </source>
</reference>
<reference key="2">
    <citation type="journal article" date="1997" name="Nature">
        <title>The complete genome sequence of the Gram-positive bacterium Bacillus subtilis.</title>
        <authorList>
            <person name="Kunst F."/>
            <person name="Ogasawara N."/>
            <person name="Moszer I."/>
            <person name="Albertini A.M."/>
            <person name="Alloni G."/>
            <person name="Azevedo V."/>
            <person name="Bertero M.G."/>
            <person name="Bessieres P."/>
            <person name="Bolotin A."/>
            <person name="Borchert S."/>
            <person name="Borriss R."/>
            <person name="Boursier L."/>
            <person name="Brans A."/>
            <person name="Braun M."/>
            <person name="Brignell S.C."/>
            <person name="Bron S."/>
            <person name="Brouillet S."/>
            <person name="Bruschi C.V."/>
            <person name="Caldwell B."/>
            <person name="Capuano V."/>
            <person name="Carter N.M."/>
            <person name="Choi S.-K."/>
            <person name="Codani J.-J."/>
            <person name="Connerton I.F."/>
            <person name="Cummings N.J."/>
            <person name="Daniel R.A."/>
            <person name="Denizot F."/>
            <person name="Devine K.M."/>
            <person name="Duesterhoeft A."/>
            <person name="Ehrlich S.D."/>
            <person name="Emmerson P.T."/>
            <person name="Entian K.-D."/>
            <person name="Errington J."/>
            <person name="Fabret C."/>
            <person name="Ferrari E."/>
            <person name="Foulger D."/>
            <person name="Fritz C."/>
            <person name="Fujita M."/>
            <person name="Fujita Y."/>
            <person name="Fuma S."/>
            <person name="Galizzi A."/>
            <person name="Galleron N."/>
            <person name="Ghim S.-Y."/>
            <person name="Glaser P."/>
            <person name="Goffeau A."/>
            <person name="Golightly E.J."/>
            <person name="Grandi G."/>
            <person name="Guiseppi G."/>
            <person name="Guy B.J."/>
            <person name="Haga K."/>
            <person name="Haiech J."/>
            <person name="Harwood C.R."/>
            <person name="Henaut A."/>
            <person name="Hilbert H."/>
            <person name="Holsappel S."/>
            <person name="Hosono S."/>
            <person name="Hullo M.-F."/>
            <person name="Itaya M."/>
            <person name="Jones L.-M."/>
            <person name="Joris B."/>
            <person name="Karamata D."/>
            <person name="Kasahara Y."/>
            <person name="Klaerr-Blanchard M."/>
            <person name="Klein C."/>
            <person name="Kobayashi Y."/>
            <person name="Koetter P."/>
            <person name="Koningstein G."/>
            <person name="Krogh S."/>
            <person name="Kumano M."/>
            <person name="Kurita K."/>
            <person name="Lapidus A."/>
            <person name="Lardinois S."/>
            <person name="Lauber J."/>
            <person name="Lazarevic V."/>
            <person name="Lee S.-M."/>
            <person name="Levine A."/>
            <person name="Liu H."/>
            <person name="Masuda S."/>
            <person name="Mauel C."/>
            <person name="Medigue C."/>
            <person name="Medina N."/>
            <person name="Mellado R.P."/>
            <person name="Mizuno M."/>
            <person name="Moestl D."/>
            <person name="Nakai S."/>
            <person name="Noback M."/>
            <person name="Noone D."/>
            <person name="O'Reilly M."/>
            <person name="Ogawa K."/>
            <person name="Ogiwara A."/>
            <person name="Oudega B."/>
            <person name="Park S.-H."/>
            <person name="Parro V."/>
            <person name="Pohl T.M."/>
            <person name="Portetelle D."/>
            <person name="Porwollik S."/>
            <person name="Prescott A.M."/>
            <person name="Presecan E."/>
            <person name="Pujic P."/>
            <person name="Purnelle B."/>
            <person name="Rapoport G."/>
            <person name="Rey M."/>
            <person name="Reynolds S."/>
            <person name="Rieger M."/>
            <person name="Rivolta C."/>
            <person name="Rocha E."/>
            <person name="Roche B."/>
            <person name="Rose M."/>
            <person name="Sadaie Y."/>
            <person name="Sato T."/>
            <person name="Scanlan E."/>
            <person name="Schleich S."/>
            <person name="Schroeter R."/>
            <person name="Scoffone F."/>
            <person name="Sekiguchi J."/>
            <person name="Sekowska A."/>
            <person name="Seror S.J."/>
            <person name="Serror P."/>
            <person name="Shin B.-S."/>
            <person name="Soldo B."/>
            <person name="Sorokin A."/>
            <person name="Tacconi E."/>
            <person name="Takagi T."/>
            <person name="Takahashi H."/>
            <person name="Takemaru K."/>
            <person name="Takeuchi M."/>
            <person name="Tamakoshi A."/>
            <person name="Tanaka T."/>
            <person name="Terpstra P."/>
            <person name="Tognoni A."/>
            <person name="Tosato V."/>
            <person name="Uchiyama S."/>
            <person name="Vandenbol M."/>
            <person name="Vannier F."/>
            <person name="Vassarotti A."/>
            <person name="Viari A."/>
            <person name="Wambutt R."/>
            <person name="Wedler E."/>
            <person name="Wedler H."/>
            <person name="Weitzenegger T."/>
            <person name="Winters P."/>
            <person name="Wipat A."/>
            <person name="Yamamoto H."/>
            <person name="Yamane K."/>
            <person name="Yasumoto K."/>
            <person name="Yata K."/>
            <person name="Yoshida K."/>
            <person name="Yoshikawa H.-F."/>
            <person name="Zumstein E."/>
            <person name="Yoshikawa H."/>
            <person name="Danchin A."/>
        </authorList>
    </citation>
    <scope>NUCLEOTIDE SEQUENCE [LARGE SCALE GENOMIC DNA]</scope>
    <source>
        <strain>168</strain>
    </source>
</reference>
<organism>
    <name type="scientific">Bacillus subtilis (strain 168)</name>
    <dbReference type="NCBI Taxonomy" id="224308"/>
    <lineage>
        <taxon>Bacteria</taxon>
        <taxon>Bacillati</taxon>
        <taxon>Bacillota</taxon>
        <taxon>Bacilli</taxon>
        <taxon>Bacillales</taxon>
        <taxon>Bacillaceae</taxon>
        <taxon>Bacillus</taxon>
    </lineage>
</organism>
<feature type="chain" id="PRO_0000375902" description="Uncharacterized protein YddA">
    <location>
        <begin position="1"/>
        <end position="102"/>
    </location>
</feature>
<gene>
    <name type="primary">yddA</name>
    <name type="ordered locus">BSU04900</name>
</gene>
<dbReference type="EMBL" id="AB001488">
    <property type="protein sequence ID" value="BAA19327.1"/>
    <property type="molecule type" value="Genomic_DNA"/>
</dbReference>
<dbReference type="EMBL" id="AL009126">
    <property type="protein sequence ID" value="CAB12297.1"/>
    <property type="molecule type" value="Genomic_DNA"/>
</dbReference>
<dbReference type="PIR" id="B69775">
    <property type="entry name" value="B69775"/>
</dbReference>
<dbReference type="RefSeq" id="NP_388371.1">
    <property type="nucleotide sequence ID" value="NC_000964.3"/>
</dbReference>
<dbReference type="RefSeq" id="WP_009966625.1">
    <property type="nucleotide sequence ID" value="NZ_OZ025638.1"/>
</dbReference>
<dbReference type="SMR" id="P96638"/>
<dbReference type="FunCoup" id="P96638">
    <property type="interactions" value="195"/>
</dbReference>
<dbReference type="STRING" id="224308.BSU04900"/>
<dbReference type="PaxDb" id="224308-BSU04900"/>
<dbReference type="EnsemblBacteria" id="CAB12297">
    <property type="protein sequence ID" value="CAB12297"/>
    <property type="gene ID" value="BSU_04900"/>
</dbReference>
<dbReference type="GeneID" id="938135"/>
<dbReference type="KEGG" id="bsu:BSU04900"/>
<dbReference type="PATRIC" id="fig|224308.179.peg.521"/>
<dbReference type="eggNOG" id="ENOG5033NZD">
    <property type="taxonomic scope" value="Bacteria"/>
</dbReference>
<dbReference type="InParanoid" id="P96638"/>
<dbReference type="OrthoDB" id="2366231at2"/>
<dbReference type="BioCyc" id="BSUB:BSU04900-MONOMER"/>
<dbReference type="Proteomes" id="UP000001570">
    <property type="component" value="Chromosome"/>
</dbReference>
<protein>
    <recommendedName>
        <fullName>Uncharacterized protein YddA</fullName>
    </recommendedName>
</protein>
<sequence length="102" mass="11967">MSAVDKRFKSLGFNVGIPSLVFVRSLSRDCMLVVEGERVKGFAEYRYTFYKTRYLPDGRMTSLKVYMENQSIKRVLHRVASFLSFLERTKQIEQKECEKVAQ</sequence>